<gene>
    <name type="primary">Dmxl1</name>
</gene>
<evidence type="ECO:0000250" key="1">
    <source>
        <dbReference type="UniProtKB" id="Q9Y485"/>
    </source>
</evidence>
<evidence type="ECO:0000256" key="2">
    <source>
        <dbReference type="SAM" id="MobiDB-lite"/>
    </source>
</evidence>
<evidence type="ECO:0000305" key="3"/>
<evidence type="ECO:0007744" key="4">
    <source>
    </source>
</evidence>
<evidence type="ECO:0007744" key="5">
    <source>
    </source>
</evidence>
<dbReference type="EMBL" id="AY590892">
    <property type="protein sequence ID" value="AAT01618.1"/>
    <property type="molecule type" value="mRNA"/>
</dbReference>
<dbReference type="EMBL" id="BC056490">
    <property type="protein sequence ID" value="AAH56490.1"/>
    <property type="molecule type" value="mRNA"/>
</dbReference>
<dbReference type="EMBL" id="AK050888">
    <property type="protein sequence ID" value="BAC34446.1"/>
    <property type="molecule type" value="mRNA"/>
</dbReference>
<dbReference type="EMBL" id="AK166520">
    <property type="protein sequence ID" value="BAE38824.1"/>
    <property type="status" value="ALT_INIT"/>
    <property type="molecule type" value="mRNA"/>
</dbReference>
<dbReference type="CCDS" id="CCDS37816.2"/>
<dbReference type="RefSeq" id="NP_001074840.2">
    <property type="nucleotide sequence ID" value="NM_001081371.2"/>
</dbReference>
<dbReference type="BioGRID" id="232188">
    <property type="interactions" value="5"/>
</dbReference>
<dbReference type="FunCoup" id="Q6PNC0">
    <property type="interactions" value="1957"/>
</dbReference>
<dbReference type="IntAct" id="Q6PNC0">
    <property type="interactions" value="1"/>
</dbReference>
<dbReference type="MINT" id="Q6PNC0"/>
<dbReference type="STRING" id="10090.ENSMUSP00000137871"/>
<dbReference type="GlyGen" id="Q6PNC0">
    <property type="glycosylation" value="2 sites, 1 N-linked glycan (1 site)"/>
</dbReference>
<dbReference type="iPTMnet" id="Q6PNC0"/>
<dbReference type="PhosphoSitePlus" id="Q6PNC0"/>
<dbReference type="SwissPalm" id="Q6PNC0"/>
<dbReference type="jPOST" id="Q6PNC0"/>
<dbReference type="PaxDb" id="10090-ENSMUSP00000045559"/>
<dbReference type="ProteomicsDB" id="279737"/>
<dbReference type="Pumba" id="Q6PNC0"/>
<dbReference type="Antibodypedia" id="49471">
    <property type="antibodies" value="21 antibodies from 12 providers"/>
</dbReference>
<dbReference type="Ensembl" id="ENSMUST00000180611.8">
    <property type="protein sequence ID" value="ENSMUSP00000137871.2"/>
    <property type="gene ID" value="ENSMUSG00000037416.14"/>
</dbReference>
<dbReference type="GeneID" id="240283"/>
<dbReference type="KEGG" id="mmu:240283"/>
<dbReference type="UCSC" id="uc008ewo.2">
    <property type="organism name" value="mouse"/>
</dbReference>
<dbReference type="AGR" id="MGI:2443926"/>
<dbReference type="CTD" id="1657"/>
<dbReference type="MGI" id="MGI:2443926">
    <property type="gene designation" value="Dmxl1"/>
</dbReference>
<dbReference type="VEuPathDB" id="HostDB:ENSMUSG00000037416"/>
<dbReference type="eggNOG" id="KOG1064">
    <property type="taxonomic scope" value="Eukaryota"/>
</dbReference>
<dbReference type="GeneTree" id="ENSGT00390000000096"/>
<dbReference type="HOGENOM" id="CLU_000267_0_0_1"/>
<dbReference type="InParanoid" id="Q6PNC0"/>
<dbReference type="OMA" id="DSQWQKT"/>
<dbReference type="PhylomeDB" id="Q6PNC0"/>
<dbReference type="BioGRID-ORCS" id="240283">
    <property type="hits" value="6 hits in 74 CRISPR screens"/>
</dbReference>
<dbReference type="ChiTaRS" id="Dmxl1">
    <property type="organism name" value="mouse"/>
</dbReference>
<dbReference type="PRO" id="PR:Q6PNC0"/>
<dbReference type="Proteomes" id="UP000000589">
    <property type="component" value="Chromosome 18"/>
</dbReference>
<dbReference type="RNAct" id="Q6PNC0">
    <property type="molecule type" value="protein"/>
</dbReference>
<dbReference type="Bgee" id="ENSMUSG00000037416">
    <property type="expression patterns" value="Expressed in epithelium of small intestine and 252 other cell types or tissues"/>
</dbReference>
<dbReference type="ExpressionAtlas" id="Q6PNC0">
    <property type="expression patterns" value="baseline and differential"/>
</dbReference>
<dbReference type="FunFam" id="2.130.10.10:FF:000540">
    <property type="entry name" value="Dmx like 1"/>
    <property type="match status" value="1"/>
</dbReference>
<dbReference type="FunFam" id="2.130.10.10:FF:000150">
    <property type="entry name" value="Dmx-like 2, isoform CRA_c"/>
    <property type="match status" value="1"/>
</dbReference>
<dbReference type="FunFam" id="2.130.10.10:FF:000093">
    <property type="entry name" value="DmX-like protein 1"/>
    <property type="match status" value="1"/>
</dbReference>
<dbReference type="Gene3D" id="2.130.10.10">
    <property type="entry name" value="YVTN repeat-like/Quinoprotein amine dehydrogenase"/>
    <property type="match status" value="3"/>
</dbReference>
<dbReference type="InterPro" id="IPR052208">
    <property type="entry name" value="DmX-like/RAVE_component"/>
</dbReference>
<dbReference type="InterPro" id="IPR022033">
    <property type="entry name" value="Rav1p_C"/>
</dbReference>
<dbReference type="InterPro" id="IPR015943">
    <property type="entry name" value="WD40/YVTN_repeat-like_dom_sf"/>
</dbReference>
<dbReference type="InterPro" id="IPR036322">
    <property type="entry name" value="WD40_repeat_dom_sf"/>
</dbReference>
<dbReference type="InterPro" id="IPR001680">
    <property type="entry name" value="WD40_rpt"/>
</dbReference>
<dbReference type="PANTHER" id="PTHR13950:SF12">
    <property type="entry name" value="DMX-LIKE PROTEIN 1"/>
    <property type="match status" value="1"/>
</dbReference>
<dbReference type="PANTHER" id="PTHR13950">
    <property type="entry name" value="RABCONNECTIN-RELATED"/>
    <property type="match status" value="1"/>
</dbReference>
<dbReference type="Pfam" id="PF12234">
    <property type="entry name" value="Rav1p_C"/>
    <property type="match status" value="2"/>
</dbReference>
<dbReference type="Pfam" id="PF00400">
    <property type="entry name" value="WD40"/>
    <property type="match status" value="2"/>
</dbReference>
<dbReference type="SMART" id="SM00320">
    <property type="entry name" value="WD40"/>
    <property type="match status" value="10"/>
</dbReference>
<dbReference type="SUPFAM" id="SSF50978">
    <property type="entry name" value="WD40 repeat-like"/>
    <property type="match status" value="2"/>
</dbReference>
<dbReference type="PROSITE" id="PS00678">
    <property type="entry name" value="WD_REPEATS_1"/>
    <property type="match status" value="1"/>
</dbReference>
<dbReference type="PROSITE" id="PS50082">
    <property type="entry name" value="WD_REPEATS_2"/>
    <property type="match status" value="1"/>
</dbReference>
<dbReference type="PROSITE" id="PS50294">
    <property type="entry name" value="WD_REPEATS_REGION"/>
    <property type="match status" value="1"/>
</dbReference>
<sequence>MNLHQVLTGAVNPGDHCFAVGSVGEQRFTAYASGCDIVILGSNFERLQIIPGAKHGNIQVGCVDCSMQQGKIAASYGNVISVFEPVSLPKKRKNLEFYSQWQKSGQFFLDSIAHNITWDPAGNRLLTGSSCLQLWCNSRKQTEDENPDKTDLNFGNWMCIWHCKTASQVHLMKFSPDGEFFATAGKDDCLLKVWYNVENWRPAVTSPDKNSEKQSQGEIDFSFVYLAHPRAVNGFSWRKTSKYMPRASVCNVLLTCCKDNVCRLWVETFLPNDCFLYGSDCNHWCEPVSLTNNLKRNASSKDRVQSALEVNLRPFRRGRSRSLALVAHTGYLPHQQDPHHAHRNTPLHANALCHFHIAASINPATDIPLLPSITSLSLNENEEKCGPFVVHWLNNKELHFTLSMEVFLQQLRKSFEQPSSEASVEDSIQADLKSDEELDDGVDDLKINHEKKELDEDKMLPSSSFTPLSSAAVDHQIEVLLSEWSKNADMLFSIHPMDGSLLVWHVDWLDEYQPGMFRQVQVSFVSRIPVAFPTGDANSLCKSIVMYACTKNVDLAIQQGKQRPTGLTRSTSMLISSAHSKSSNNLKLSIFTPNVMMISKHADGSLNQWLVSFAEESAFSTVLSISHKSRYCGHRFHLNDLACHSVLPLLLTTSHHNALRTPNVGNQKQAHDAVNTEECSLAQQNKSNVDMAFQDPNAIYSELILWRVDPVGPLSFSGGVSELARINSLHVSAFSNVAWLPTLIPSYCLGAYCNSPSACFVASDGQYLRLYEAVIDAKKLLYELSNPEISKYVGEVFNIVSQQSTARPGCIIALDSITKLHGRKTQLLHVFQEDFILNNLEKKRLGVDNILLDSDSSCNGFSEKFYLVVIECTEDNRSLLRMWDLHLRSTPVSLDERIDTKISEASWLPEEHYSSSPEKILSPFSQKFQACRANLQSTSKLSLFSEMVYSKELDLPEGVEIISVKPSAGHLSSSSIYPVCSAPYLLATSCSDDKVRFWRCRVTNGESATSKNGKLDVVYVWEEWPLLIEDGLENNSSVTVPGRPVEVSCAHTSRLAVAYKQPTGNSRSQEFVMHVSIFECESTGGSCWILEQTIHLDELSTVLDSGISIDSNLVAYNKQETYLVSKESITSNTKHLVHLDWMSREDGSHILTVGIGSKLFMYGPMAGKVQDQTGKENQAFPLWDSTKIVPLSKFVLLRSVDLVSSVEGAPPFPVSLSWVRDGILVVGMDCEMHVYSQWQPSNKQEPVISESYNGSTPSILSLIKQSNSSSSGLHPPKKTLTRSMTSLAQKICGKKSIFDPSVDMEDSGLFEAAHVLSPTLPQYHPLQLLELMDLGKVRRAKAILSHLVKCIAGEVVALNEAESNHERRLRSLTISASGSTTRDPQAFNKADSRDYTEIDSVPPLPLYALLAADDDSYCSSLEKTGSESSLKKSKQLSKESYDELFQTSVLMSDNHMLETDEENTQPRVIDLSQYSPTYFGPEHAQVLSGHLLHSSLPGLTRMEQMSLMALADTIATTSTDIGESRDRNQGGETLDECGLKFLLAVRLHTFLTTSLPAYRAQLLHQGLSTGHFAWAFHSVAEEELLNMLPAMQKDDPTWSELRAMGVGWWVRNARILRRCIEKVAKAAFHRNNDPLDAAIFYLAMKKKAVIWGLYRSQKDTKMTQFFGHNFEEERWRKAALKNAFSLLGKQRFEHSAAFFLLGGCLKDAIEVCLEKLNDIQLALVIARLFESEFDKSATYKSILRKKVLGIGSPASELSSSSINAHHDPFLRSMAHWILEDYSAALETLIKQPVTEDEDQVMMSACNPIVFNFYNYLRTHPLLLRRHFGSSSETFSTHMTLAGKSGLAGTINLSERRLFFTTASAHLKAGCPMLALEVLSKMPKVSKKAKPCCRGSSFLTSKDSSLKLDVREDKCCAADWSPSLTNGLESSSEGSSERHSHSTLSFDWSQPSVVFQDDSLELKWDSDNDEENEDPPISMKEIRPLQRKTVKEIDELSSYTDSLSTLDENDILNPSEDIIAVQLKFRACLKILTVELRTLSTGYEIDGGKLRYQLYHWLEKEVVALQRTCDFCSDADQLQTTFSQSADESGSTEDADDLHHQTKVKQLRESFQEKRQWLLKYQSLLRMFLSYCVLHGSHGGGLASVRMELILLLQESQQETAEPIFSNPLSEQTSVPLLFACTASAKTVVANPLLHLSNLTHDILHAIINFDSPPHPDSQTNKVYVMHTLAASLSACIYQCLCGSHNYSSFQTNQFTGMVYQTVLLAHRHSLRTGSLDESVTPNTSPAQWPGINFLIQLLNSSGEEAQSGLTVLLCEILTAVYLSLFIHGLATHSSNELFRIVAHPLNEKMWSAVFGGGAHVPSKGQANSKALSVEGEKQNRHISPSKVSARESPVSSSSGNQEPPAVKEKFVPPELSIWDYFIAKPFLPPSQSRAEYDSEESLESDDEEEEDDDDALPSGLQLHEHSNSNSFSWSLMRLAMVQLVLNNLKTFYPFAGHDLAELPVSSPLCHAVLKTLQCWEQVLLRRLEIHGGPPQNYISSHTSEENVSAGPAILRHKALLEPTNTPFKSKNHLALSVKRLWQYLVKQEEIQETFIRNIFTKKRCLNEIEADLGYPGGKARIIHKESDIITAFAVNRANRNCIAIASSHDVQELDVSAILATQIYTWVDDDTETETKGSEDFLVIHARDDLSAVQGSTPYTHSNPGTPINMPWLGSTQTGRGASVMLKKAINNVRRMTSHPTLPYYLTGAQDGSVRMFEWGHSQQITCFRSGGNSRITRMRFNYQGNKFGIVDADGYLSLYQTNWKCCPVTGSMPKPYLAWQCHNKTANDFVFVSSSSLIATAGLSSDNRNICLWDTLVAPANSLVHAFTCHDSGATVLAYAPKHQLLISGGRKGFTCIFDLRQRQQRQLFQSHDSPVKAIAIDPTEEYFVTGSAEGNIKIWSLSSFSLLHTFINEHARQSIFRNIGTGVMQIETGPANHIFSCGADGTMKMRILPDQFSPLNEVLKNDVKFML</sequence>
<proteinExistence type="evidence at protein level"/>
<comment type="sequence caution" evidence="3">
    <conflict type="erroneous initiation">
        <sequence resource="EMBL-CDS" id="BAE38824"/>
    </conflict>
</comment>
<feature type="chain" id="PRO_0000223323" description="DmX-like protein 1">
    <location>
        <begin position="1"/>
        <end position="3013"/>
    </location>
</feature>
<feature type="repeat" description="WD 1">
    <location>
        <begin position="108"/>
        <end position="145"/>
    </location>
</feature>
<feature type="repeat" description="WD 2">
    <location>
        <begin position="164"/>
        <end position="204"/>
    </location>
</feature>
<feature type="repeat" description="WD 3">
    <location>
        <begin position="227"/>
        <end position="275"/>
    </location>
</feature>
<feature type="repeat" description="WD 4">
    <location>
        <begin position="474"/>
        <end position="514"/>
    </location>
</feature>
<feature type="repeat" description="WD 5">
    <location>
        <begin position="578"/>
        <end position="619"/>
    </location>
</feature>
<feature type="repeat" description="WD 6">
    <location>
        <begin position="842"/>
        <end position="893"/>
    </location>
</feature>
<feature type="repeat" description="WD 7">
    <location>
        <begin position="970"/>
        <end position="1008"/>
    </location>
</feature>
<feature type="repeat" description="WD 8">
    <location>
        <begin position="1145"/>
        <end position="1193"/>
    </location>
</feature>
<feature type="repeat" description="WD 9">
    <location>
        <begin position="1208"/>
        <end position="1248"/>
    </location>
</feature>
<feature type="repeat" description="WD 10">
    <location>
        <begin position="2728"/>
        <end position="2769"/>
    </location>
</feature>
<feature type="repeat" description="WD 11">
    <location>
        <begin position="2771"/>
        <end position="2810"/>
    </location>
</feature>
<feature type="repeat" description="WD 12">
    <location>
        <begin position="2822"/>
        <end position="2864"/>
    </location>
</feature>
<feature type="repeat" description="WD 13">
    <location>
        <begin position="2870"/>
        <end position="2909"/>
    </location>
</feature>
<feature type="repeat" description="WD 14">
    <location>
        <begin position="2912"/>
        <end position="2951"/>
    </location>
</feature>
<feature type="repeat" description="WD 15">
    <location>
        <begin position="2964"/>
        <end position="3002"/>
    </location>
</feature>
<feature type="region of interest" description="Disordered" evidence="2">
    <location>
        <begin position="418"/>
        <end position="442"/>
    </location>
</feature>
<feature type="region of interest" description="Disordered" evidence="2">
    <location>
        <begin position="2364"/>
        <end position="2406"/>
    </location>
</feature>
<feature type="region of interest" description="Disordered" evidence="2">
    <location>
        <begin position="2431"/>
        <end position="2462"/>
    </location>
</feature>
<feature type="compositionally biased region" description="Low complexity" evidence="2">
    <location>
        <begin position="2385"/>
        <end position="2398"/>
    </location>
</feature>
<feature type="compositionally biased region" description="Acidic residues" evidence="2">
    <location>
        <begin position="2437"/>
        <end position="2455"/>
    </location>
</feature>
<feature type="modified residue" description="Phosphoserine" evidence="1">
    <location>
        <position position="322"/>
    </location>
</feature>
<feature type="modified residue" description="Phosphoserine" evidence="5">
    <location>
        <position position="420"/>
    </location>
</feature>
<feature type="modified residue" description="Phosphoserine" evidence="5">
    <location>
        <position position="423"/>
    </location>
</feature>
<feature type="modified residue" description="Phosphoserine" evidence="4 5">
    <location>
        <position position="434"/>
    </location>
</feature>
<feature type="modified residue" description="Phosphoserine" evidence="5">
    <location>
        <position position="572"/>
    </location>
</feature>
<feature type="modified residue" description="Phosphoserine" evidence="5">
    <location>
        <position position="916"/>
    </location>
</feature>
<feature type="modified residue" description="Phosphoserine" evidence="5">
    <location>
        <position position="922"/>
    </location>
</feature>
<feature type="modified residue" description="Phosphoserine" evidence="1">
    <location>
        <position position="1829"/>
    </location>
</feature>
<feature type="modified residue" description="Phosphoserine" evidence="1">
    <location>
        <position position="1896"/>
    </location>
</feature>
<feature type="modified residue" description="Phosphoserine" evidence="5">
    <location>
        <position position="1903"/>
    </location>
</feature>
<feature type="modified residue" description="Phosphoserine" evidence="5">
    <location>
        <position position="1965"/>
    </location>
</feature>
<feature type="sequence conflict" description="In Ref. 3; BAE38824." evidence="3" ref="3">
    <original>S</original>
    <variation>N</variation>
    <location>
        <position position="2812"/>
    </location>
</feature>
<feature type="sequence conflict" description="In Ref. 3; BAE38824." evidence="3" ref="3">
    <original>S</original>
    <variation>L</variation>
    <location>
        <position position="2944"/>
    </location>
</feature>
<reference key="1">
    <citation type="submission" date="2004-04" db="EMBL/GenBank/DDBJ databases">
        <title>Mus musculus mRNA for Dmx-like 1 protein.</title>
        <authorList>
            <person name="Bikar S.E."/>
            <person name="Kraemer C."/>
            <person name="Schmidt E.R."/>
        </authorList>
    </citation>
    <scope>NUCLEOTIDE SEQUENCE [MRNA]</scope>
    <source>
        <strain>129/Sv</strain>
        <tissue>Embryonic stem cell</tissue>
    </source>
</reference>
<reference key="2">
    <citation type="journal article" date="2004" name="Genome Res.">
        <title>The status, quality, and expansion of the NIH full-length cDNA project: the Mammalian Gene Collection (MGC).</title>
        <authorList>
            <consortium name="The MGC Project Team"/>
        </authorList>
    </citation>
    <scope>NUCLEOTIDE SEQUENCE [LARGE SCALE MRNA] OF 1916-3013</scope>
    <source>
        <strain>C57BL/6J</strain>
        <tissue>Brain</tissue>
    </source>
</reference>
<reference key="3">
    <citation type="journal article" date="2005" name="Science">
        <title>The transcriptional landscape of the mammalian genome.</title>
        <authorList>
            <person name="Carninci P."/>
            <person name="Kasukawa T."/>
            <person name="Katayama S."/>
            <person name="Gough J."/>
            <person name="Frith M.C."/>
            <person name="Maeda N."/>
            <person name="Oyama R."/>
            <person name="Ravasi T."/>
            <person name="Lenhard B."/>
            <person name="Wells C."/>
            <person name="Kodzius R."/>
            <person name="Shimokawa K."/>
            <person name="Bajic V.B."/>
            <person name="Brenner S.E."/>
            <person name="Batalov S."/>
            <person name="Forrest A.R."/>
            <person name="Zavolan M."/>
            <person name="Davis M.J."/>
            <person name="Wilming L.G."/>
            <person name="Aidinis V."/>
            <person name="Allen J.E."/>
            <person name="Ambesi-Impiombato A."/>
            <person name="Apweiler R."/>
            <person name="Aturaliya R.N."/>
            <person name="Bailey T.L."/>
            <person name="Bansal M."/>
            <person name="Baxter L."/>
            <person name="Beisel K.W."/>
            <person name="Bersano T."/>
            <person name="Bono H."/>
            <person name="Chalk A.M."/>
            <person name="Chiu K.P."/>
            <person name="Choudhary V."/>
            <person name="Christoffels A."/>
            <person name="Clutterbuck D.R."/>
            <person name="Crowe M.L."/>
            <person name="Dalla E."/>
            <person name="Dalrymple B.P."/>
            <person name="de Bono B."/>
            <person name="Della Gatta G."/>
            <person name="di Bernardo D."/>
            <person name="Down T."/>
            <person name="Engstrom P."/>
            <person name="Fagiolini M."/>
            <person name="Faulkner G."/>
            <person name="Fletcher C.F."/>
            <person name="Fukushima T."/>
            <person name="Furuno M."/>
            <person name="Futaki S."/>
            <person name="Gariboldi M."/>
            <person name="Georgii-Hemming P."/>
            <person name="Gingeras T.R."/>
            <person name="Gojobori T."/>
            <person name="Green R.E."/>
            <person name="Gustincich S."/>
            <person name="Harbers M."/>
            <person name="Hayashi Y."/>
            <person name="Hensch T.K."/>
            <person name="Hirokawa N."/>
            <person name="Hill D."/>
            <person name="Huminiecki L."/>
            <person name="Iacono M."/>
            <person name="Ikeo K."/>
            <person name="Iwama A."/>
            <person name="Ishikawa T."/>
            <person name="Jakt M."/>
            <person name="Kanapin A."/>
            <person name="Katoh M."/>
            <person name="Kawasawa Y."/>
            <person name="Kelso J."/>
            <person name="Kitamura H."/>
            <person name="Kitano H."/>
            <person name="Kollias G."/>
            <person name="Krishnan S.P."/>
            <person name="Kruger A."/>
            <person name="Kummerfeld S.K."/>
            <person name="Kurochkin I.V."/>
            <person name="Lareau L.F."/>
            <person name="Lazarevic D."/>
            <person name="Lipovich L."/>
            <person name="Liu J."/>
            <person name="Liuni S."/>
            <person name="McWilliam S."/>
            <person name="Madan Babu M."/>
            <person name="Madera M."/>
            <person name="Marchionni L."/>
            <person name="Matsuda H."/>
            <person name="Matsuzawa S."/>
            <person name="Miki H."/>
            <person name="Mignone F."/>
            <person name="Miyake S."/>
            <person name="Morris K."/>
            <person name="Mottagui-Tabar S."/>
            <person name="Mulder N."/>
            <person name="Nakano N."/>
            <person name="Nakauchi H."/>
            <person name="Ng P."/>
            <person name="Nilsson R."/>
            <person name="Nishiguchi S."/>
            <person name="Nishikawa S."/>
            <person name="Nori F."/>
            <person name="Ohara O."/>
            <person name="Okazaki Y."/>
            <person name="Orlando V."/>
            <person name="Pang K.C."/>
            <person name="Pavan W.J."/>
            <person name="Pavesi G."/>
            <person name="Pesole G."/>
            <person name="Petrovsky N."/>
            <person name="Piazza S."/>
            <person name="Reed J."/>
            <person name="Reid J.F."/>
            <person name="Ring B.Z."/>
            <person name="Ringwald M."/>
            <person name="Rost B."/>
            <person name="Ruan Y."/>
            <person name="Salzberg S.L."/>
            <person name="Sandelin A."/>
            <person name="Schneider C."/>
            <person name="Schoenbach C."/>
            <person name="Sekiguchi K."/>
            <person name="Semple C.A."/>
            <person name="Seno S."/>
            <person name="Sessa L."/>
            <person name="Sheng Y."/>
            <person name="Shibata Y."/>
            <person name="Shimada H."/>
            <person name="Shimada K."/>
            <person name="Silva D."/>
            <person name="Sinclair B."/>
            <person name="Sperling S."/>
            <person name="Stupka E."/>
            <person name="Sugiura K."/>
            <person name="Sultana R."/>
            <person name="Takenaka Y."/>
            <person name="Taki K."/>
            <person name="Tammoja K."/>
            <person name="Tan S.L."/>
            <person name="Tang S."/>
            <person name="Taylor M.S."/>
            <person name="Tegner J."/>
            <person name="Teichmann S.A."/>
            <person name="Ueda H.R."/>
            <person name="van Nimwegen E."/>
            <person name="Verardo R."/>
            <person name="Wei C.L."/>
            <person name="Yagi K."/>
            <person name="Yamanishi H."/>
            <person name="Zabarovsky E."/>
            <person name="Zhu S."/>
            <person name="Zimmer A."/>
            <person name="Hide W."/>
            <person name="Bult C."/>
            <person name="Grimmond S.M."/>
            <person name="Teasdale R.D."/>
            <person name="Liu E.T."/>
            <person name="Brusic V."/>
            <person name="Quackenbush J."/>
            <person name="Wahlestedt C."/>
            <person name="Mattick J.S."/>
            <person name="Hume D.A."/>
            <person name="Kai C."/>
            <person name="Sasaki D."/>
            <person name="Tomaru Y."/>
            <person name="Fukuda S."/>
            <person name="Kanamori-Katayama M."/>
            <person name="Suzuki M."/>
            <person name="Aoki J."/>
            <person name="Arakawa T."/>
            <person name="Iida J."/>
            <person name="Imamura K."/>
            <person name="Itoh M."/>
            <person name="Kato T."/>
            <person name="Kawaji H."/>
            <person name="Kawagashira N."/>
            <person name="Kawashima T."/>
            <person name="Kojima M."/>
            <person name="Kondo S."/>
            <person name="Konno H."/>
            <person name="Nakano K."/>
            <person name="Ninomiya N."/>
            <person name="Nishio T."/>
            <person name="Okada M."/>
            <person name="Plessy C."/>
            <person name="Shibata K."/>
            <person name="Shiraki T."/>
            <person name="Suzuki S."/>
            <person name="Tagami M."/>
            <person name="Waki K."/>
            <person name="Watahiki A."/>
            <person name="Okamura-Oho Y."/>
            <person name="Suzuki H."/>
            <person name="Kawai J."/>
            <person name="Hayashizaki Y."/>
        </authorList>
    </citation>
    <scope>NUCLEOTIDE SEQUENCE [LARGE SCALE MRNA] OF 2719-3013</scope>
    <source>
        <strain>C57BL/6J</strain>
        <tissue>Embryo</tissue>
        <tissue>Mammary gland</tissue>
    </source>
</reference>
<reference key="4">
    <citation type="journal article" date="2007" name="Proc. Natl. Acad. Sci. U.S.A.">
        <title>Large-scale phosphorylation analysis of mouse liver.</title>
        <authorList>
            <person name="Villen J."/>
            <person name="Beausoleil S.A."/>
            <person name="Gerber S.A."/>
            <person name="Gygi S.P."/>
        </authorList>
    </citation>
    <scope>IDENTIFICATION BY MASS SPECTROMETRY [LARGE SCALE ANALYSIS]</scope>
    <source>
        <tissue>Liver</tissue>
    </source>
</reference>
<reference key="5">
    <citation type="journal article" date="2009" name="Immunity">
        <title>The phagosomal proteome in interferon-gamma-activated macrophages.</title>
        <authorList>
            <person name="Trost M."/>
            <person name="English L."/>
            <person name="Lemieux S."/>
            <person name="Courcelles M."/>
            <person name="Desjardins M."/>
            <person name="Thibault P."/>
        </authorList>
    </citation>
    <scope>PHOSPHORYLATION [LARGE SCALE ANALYSIS] AT SER-434</scope>
    <scope>IDENTIFICATION BY MASS SPECTROMETRY [LARGE SCALE ANALYSIS]</scope>
</reference>
<reference key="6">
    <citation type="journal article" date="2010" name="Cell">
        <title>A tissue-specific atlas of mouse protein phosphorylation and expression.</title>
        <authorList>
            <person name="Huttlin E.L."/>
            <person name="Jedrychowski M.P."/>
            <person name="Elias J.E."/>
            <person name="Goswami T."/>
            <person name="Rad R."/>
            <person name="Beausoleil S.A."/>
            <person name="Villen J."/>
            <person name="Haas W."/>
            <person name="Sowa M.E."/>
            <person name="Gygi S.P."/>
        </authorList>
    </citation>
    <scope>PHOSPHORYLATION [LARGE SCALE ANALYSIS] AT SER-420; SER-423; SER-434; SER-572; SER-916; SER-922; SER-1903 AND SER-1965</scope>
    <scope>IDENTIFICATION BY MASS SPECTROMETRY [LARGE SCALE ANALYSIS]</scope>
    <source>
        <tissue>Brain</tissue>
        <tissue>Brown adipose tissue</tissue>
        <tissue>Heart</tissue>
        <tissue>Kidney</tissue>
        <tissue>Liver</tissue>
        <tissue>Lung</tissue>
        <tissue>Pancreas</tissue>
        <tissue>Spleen</tissue>
        <tissue>Testis</tissue>
    </source>
</reference>
<protein>
    <recommendedName>
        <fullName>DmX-like protein 1</fullName>
        <shortName>X-like 1 protein</shortName>
    </recommendedName>
</protein>
<organism>
    <name type="scientific">Mus musculus</name>
    <name type="common">Mouse</name>
    <dbReference type="NCBI Taxonomy" id="10090"/>
    <lineage>
        <taxon>Eukaryota</taxon>
        <taxon>Metazoa</taxon>
        <taxon>Chordata</taxon>
        <taxon>Craniata</taxon>
        <taxon>Vertebrata</taxon>
        <taxon>Euteleostomi</taxon>
        <taxon>Mammalia</taxon>
        <taxon>Eutheria</taxon>
        <taxon>Euarchontoglires</taxon>
        <taxon>Glires</taxon>
        <taxon>Rodentia</taxon>
        <taxon>Myomorpha</taxon>
        <taxon>Muroidea</taxon>
        <taxon>Muridae</taxon>
        <taxon>Murinae</taxon>
        <taxon>Mus</taxon>
        <taxon>Mus</taxon>
    </lineage>
</organism>
<accession>Q6PNC0</accession>
<accession>Q3TLG8</accession>
<accession>Q6PHM6</accession>
<accession>Q8BQF2</accession>
<name>DMXL1_MOUSE</name>
<keyword id="KW-0597">Phosphoprotein</keyword>
<keyword id="KW-1185">Reference proteome</keyword>
<keyword id="KW-0677">Repeat</keyword>
<keyword id="KW-0853">WD repeat</keyword>